<proteinExistence type="evidence at transcript level"/>
<evidence type="ECO:0000255" key="1"/>
<evidence type="ECO:0000256" key="2">
    <source>
        <dbReference type="SAM" id="MobiDB-lite"/>
    </source>
</evidence>
<evidence type="ECO:0000305" key="3"/>
<evidence type="ECO:0000312" key="4">
    <source>
        <dbReference type="EMBL" id="AAU11819.1"/>
    </source>
</evidence>
<evidence type="ECO:0000312" key="5">
    <source>
        <dbReference type="EMBL" id="AAV34871.1"/>
    </source>
</evidence>
<accession>Q5UAM9</accession>
<accession>Q66SW2</accession>
<sequence>MAPRKNKVAKEEVQVTLGPQHLVGETVFGVAHIFASFNDTFVHVTDLSGRETIARVTGGMKVKADRDEASPYAAMLAAQDVAEKCKTLGITALHIKLRATGGNKTKTPGPGAQSALRALARSSMKIGRIEDVTPVPSDSTRRKGGRRGRRL</sequence>
<organism>
    <name type="scientific">Bombyx mori</name>
    <name type="common">Silk moth</name>
    <dbReference type="NCBI Taxonomy" id="7091"/>
    <lineage>
        <taxon>Eukaryota</taxon>
        <taxon>Metazoa</taxon>
        <taxon>Ecdysozoa</taxon>
        <taxon>Arthropoda</taxon>
        <taxon>Hexapoda</taxon>
        <taxon>Insecta</taxon>
        <taxon>Pterygota</taxon>
        <taxon>Neoptera</taxon>
        <taxon>Endopterygota</taxon>
        <taxon>Lepidoptera</taxon>
        <taxon>Glossata</taxon>
        <taxon>Ditrysia</taxon>
        <taxon>Bombycoidea</taxon>
        <taxon>Bombycidae</taxon>
        <taxon>Bombycinae</taxon>
        <taxon>Bombyx</taxon>
    </lineage>
</organism>
<dbReference type="EMBL" id="AY706956">
    <property type="protein sequence ID" value="AAU11819.1"/>
    <property type="molecule type" value="mRNA"/>
</dbReference>
<dbReference type="EMBL" id="AY769329">
    <property type="protein sequence ID" value="AAV34871.1"/>
    <property type="molecule type" value="mRNA"/>
</dbReference>
<dbReference type="RefSeq" id="NP_001037114.1">
    <property type="nucleotide sequence ID" value="NM_001043649.1"/>
</dbReference>
<dbReference type="RefSeq" id="XP_062525968.1">
    <property type="nucleotide sequence ID" value="XM_062669984.1"/>
</dbReference>
<dbReference type="SMR" id="Q5UAM9"/>
<dbReference type="FunCoup" id="Q5UAM9">
    <property type="interactions" value="1083"/>
</dbReference>
<dbReference type="STRING" id="7091.Q5UAM9"/>
<dbReference type="PaxDb" id="7091-BGIBMGA002405-TA"/>
<dbReference type="GeneID" id="692654"/>
<dbReference type="KEGG" id="bmor:692654"/>
<dbReference type="CTD" id="6208"/>
<dbReference type="eggNOG" id="KOG0407">
    <property type="taxonomic scope" value="Eukaryota"/>
</dbReference>
<dbReference type="HOGENOM" id="CLU_072439_6_0_1"/>
<dbReference type="InParanoid" id="Q5UAM9"/>
<dbReference type="OMA" id="KWGVAHI"/>
<dbReference type="OrthoDB" id="480978at7088"/>
<dbReference type="Proteomes" id="UP000005204">
    <property type="component" value="Unassembled WGS sequence"/>
</dbReference>
<dbReference type="GO" id="GO:1990904">
    <property type="term" value="C:ribonucleoprotein complex"/>
    <property type="evidence" value="ECO:0007669"/>
    <property type="project" value="UniProtKB-KW"/>
</dbReference>
<dbReference type="GO" id="GO:0005840">
    <property type="term" value="C:ribosome"/>
    <property type="evidence" value="ECO:0007669"/>
    <property type="project" value="UniProtKB-KW"/>
</dbReference>
<dbReference type="GO" id="GO:0003735">
    <property type="term" value="F:structural constituent of ribosome"/>
    <property type="evidence" value="ECO:0007669"/>
    <property type="project" value="InterPro"/>
</dbReference>
<dbReference type="GO" id="GO:0006412">
    <property type="term" value="P:translation"/>
    <property type="evidence" value="ECO:0007669"/>
    <property type="project" value="InterPro"/>
</dbReference>
<dbReference type="FunFam" id="3.30.420.80:FF:000002">
    <property type="entry name" value="40S ribosomal protein S14"/>
    <property type="match status" value="1"/>
</dbReference>
<dbReference type="Gene3D" id="3.30.420.80">
    <property type="entry name" value="Ribosomal protein S11"/>
    <property type="match status" value="1"/>
</dbReference>
<dbReference type="HAMAP" id="MF_01310">
    <property type="entry name" value="Ribosomal_uS11"/>
    <property type="match status" value="1"/>
</dbReference>
<dbReference type="InterPro" id="IPR001971">
    <property type="entry name" value="Ribosomal_uS11"/>
</dbReference>
<dbReference type="InterPro" id="IPR018102">
    <property type="entry name" value="Ribosomal_uS11_CS"/>
</dbReference>
<dbReference type="InterPro" id="IPR036967">
    <property type="entry name" value="Ribosomal_uS11_sf"/>
</dbReference>
<dbReference type="NCBIfam" id="NF007176">
    <property type="entry name" value="PRK09607.1"/>
    <property type="match status" value="1"/>
</dbReference>
<dbReference type="PANTHER" id="PTHR11759">
    <property type="entry name" value="40S RIBOSOMAL PROTEIN S14/30S RIBOSOMAL PROTEIN S11"/>
    <property type="match status" value="1"/>
</dbReference>
<dbReference type="Pfam" id="PF00411">
    <property type="entry name" value="Ribosomal_S11"/>
    <property type="match status" value="1"/>
</dbReference>
<dbReference type="PIRSF" id="PIRSF002131">
    <property type="entry name" value="Ribosomal_S11"/>
    <property type="match status" value="1"/>
</dbReference>
<dbReference type="SUPFAM" id="SSF53137">
    <property type="entry name" value="Translational machinery components"/>
    <property type="match status" value="1"/>
</dbReference>
<dbReference type="PROSITE" id="PS00054">
    <property type="entry name" value="RIBOSOMAL_S11"/>
    <property type="match status" value="1"/>
</dbReference>
<feature type="chain" id="PRO_0000372799" description="Small ribosomal subunit protein uS11">
    <location>
        <begin position="1"/>
        <end position="151"/>
    </location>
</feature>
<feature type="region of interest" description="Disordered" evidence="2">
    <location>
        <begin position="131"/>
        <end position="151"/>
    </location>
</feature>
<feature type="compositionally biased region" description="Basic residues" evidence="2">
    <location>
        <begin position="142"/>
        <end position="151"/>
    </location>
</feature>
<feature type="sequence conflict" description="In Ref. 1; AAU11819." evidence="3" ref="1">
    <original>D</original>
    <variation>G</variation>
    <location>
        <position position="65"/>
    </location>
</feature>
<keyword id="KW-1185">Reference proteome</keyword>
<keyword id="KW-0687">Ribonucleoprotein</keyword>
<keyword id="KW-0689">Ribosomal protein</keyword>
<protein>
    <recommendedName>
        <fullName evidence="3">Small ribosomal subunit protein uS11</fullName>
    </recommendedName>
    <alternativeName>
        <fullName>40S ribosomal protein S14</fullName>
    </alternativeName>
</protein>
<name>RS14_BOMMO</name>
<gene>
    <name evidence="4" type="primary">RpS14</name>
</gene>
<reference evidence="4" key="1">
    <citation type="submission" date="2004-08" db="EMBL/GenBank/DDBJ databases">
        <title>Full-length ribosomal protein sequence from an EST library of Bombyx mori.</title>
        <authorList>
            <person name="Hong S.M."/>
            <person name="Eum J.H."/>
            <person name="Kim N.S."/>
            <person name="Lee J.S."/>
            <person name="Kang S.W."/>
            <person name="Nho S.K."/>
        </authorList>
    </citation>
    <scope>NUCLEOTIDE SEQUENCE [MRNA]</scope>
    <source>
        <strain evidence="4">Kl20</strain>
    </source>
</reference>
<reference evidence="4" key="2">
    <citation type="submission" date="2004-09" db="EMBL/GenBank/DDBJ databases">
        <title>Ribosomal proteins of Bombyx mori.</title>
        <authorList>
            <person name="Heckel D.G."/>
            <person name="Morgan M."/>
            <person name="Shimada T."/>
            <person name="Mita K."/>
        </authorList>
    </citation>
    <scope>NUCLEOTIDE SEQUENCE [MRNA]</scope>
    <source>
        <strain evidence="5">C108</strain>
    </source>
</reference>
<comment type="similarity">
    <text evidence="1">Belongs to the universal ribosomal protein uS11 family.</text>
</comment>